<dbReference type="EMBL" id="AB002357">
    <property type="protein sequence ID" value="BAA20815.2"/>
    <property type="status" value="ALT_INIT"/>
    <property type="molecule type" value="mRNA"/>
</dbReference>
<dbReference type="EMBL" id="AK299877">
    <property type="protein sequence ID" value="BAG61727.1"/>
    <property type="molecule type" value="mRNA"/>
</dbReference>
<dbReference type="EMBL" id="AL121897">
    <property type="status" value="NOT_ANNOTATED_CDS"/>
    <property type="molecule type" value="Genomic_DNA"/>
</dbReference>
<dbReference type="EMBL" id="AL354800">
    <property type="status" value="NOT_ANNOTATED_CDS"/>
    <property type="molecule type" value="Genomic_DNA"/>
</dbReference>
<dbReference type="EMBL" id="CH471077">
    <property type="protein sequence ID" value="EAW76381.1"/>
    <property type="molecule type" value="Genomic_DNA"/>
</dbReference>
<dbReference type="EMBL" id="CH471077">
    <property type="protein sequence ID" value="EAW76382.1"/>
    <property type="molecule type" value="Genomic_DNA"/>
</dbReference>
<dbReference type="EMBL" id="BC136310">
    <property type="protein sequence ID" value="AAI36311.1"/>
    <property type="molecule type" value="mRNA"/>
</dbReference>
<dbReference type="EMBL" id="BC136311">
    <property type="protein sequence ID" value="AAI36312.1"/>
    <property type="molecule type" value="mRNA"/>
</dbReference>
<dbReference type="CCDS" id="CCDS13200.1">
    <molecule id="O15066-1"/>
</dbReference>
<dbReference type="RefSeq" id="NP_004789.1">
    <molecule id="O15066-1"/>
    <property type="nucleotide sequence ID" value="NM_004798.4"/>
</dbReference>
<dbReference type="RefSeq" id="XP_047296545.1">
    <molecule id="O15066-1"/>
    <property type="nucleotide sequence ID" value="XM_047440589.1"/>
</dbReference>
<dbReference type="RefSeq" id="XP_047296546.1">
    <molecule id="O15066-1"/>
    <property type="nucleotide sequence ID" value="XM_047440590.1"/>
</dbReference>
<dbReference type="RefSeq" id="XP_054180203.1">
    <molecule id="O15066-1"/>
    <property type="nucleotide sequence ID" value="XM_054324228.1"/>
</dbReference>
<dbReference type="RefSeq" id="XP_054180204.1">
    <molecule id="O15066-1"/>
    <property type="nucleotide sequence ID" value="XM_054324229.1"/>
</dbReference>
<dbReference type="PDB" id="3B6U">
    <property type="method" value="X-ray"/>
    <property type="resolution" value="1.80 A"/>
    <property type="chains" value="A/B=6-359"/>
</dbReference>
<dbReference type="PDBsum" id="3B6U"/>
<dbReference type="SMR" id="O15066"/>
<dbReference type="BioGRID" id="114772">
    <property type="interactions" value="56"/>
</dbReference>
<dbReference type="ComplexPortal" id="CPX-3138">
    <property type="entry name" value="KIF3 complex variant AB"/>
</dbReference>
<dbReference type="ComplexPortal" id="CPX-3201">
    <property type="entry name" value="KIF3 complex variant AB-KAP3"/>
</dbReference>
<dbReference type="CORUM" id="O15066"/>
<dbReference type="FunCoup" id="O15066">
    <property type="interactions" value="1411"/>
</dbReference>
<dbReference type="IntAct" id="O15066">
    <property type="interactions" value="21"/>
</dbReference>
<dbReference type="MINT" id="O15066"/>
<dbReference type="STRING" id="9606.ENSP00000364864"/>
<dbReference type="BindingDB" id="O15066"/>
<dbReference type="ChEMBL" id="CHEMBL6109"/>
<dbReference type="GlyGen" id="O15066">
    <property type="glycosylation" value="1 site"/>
</dbReference>
<dbReference type="iPTMnet" id="O15066"/>
<dbReference type="MetOSite" id="O15066"/>
<dbReference type="PhosphoSitePlus" id="O15066"/>
<dbReference type="SwissPalm" id="O15066"/>
<dbReference type="BioMuta" id="KIF3B"/>
<dbReference type="jPOST" id="O15066"/>
<dbReference type="MassIVE" id="O15066"/>
<dbReference type="PaxDb" id="9606-ENSP00000364864"/>
<dbReference type="PeptideAtlas" id="O15066"/>
<dbReference type="ProteomicsDB" id="48416">
    <molecule id="O15066-1"/>
</dbReference>
<dbReference type="ProteomicsDB" id="5044"/>
<dbReference type="Pumba" id="O15066"/>
<dbReference type="Antibodypedia" id="1560">
    <property type="antibodies" value="114 antibodies from 23 providers"/>
</dbReference>
<dbReference type="DNASU" id="9371"/>
<dbReference type="Ensembl" id="ENST00000375712.4">
    <molecule id="O15066-1"/>
    <property type="protein sequence ID" value="ENSP00000364864.3"/>
    <property type="gene ID" value="ENSG00000101350.8"/>
</dbReference>
<dbReference type="GeneID" id="9371"/>
<dbReference type="KEGG" id="hsa:9371"/>
<dbReference type="MANE-Select" id="ENST00000375712.4">
    <property type="protein sequence ID" value="ENSP00000364864.3"/>
    <property type="RefSeq nucleotide sequence ID" value="NM_004798.4"/>
    <property type="RefSeq protein sequence ID" value="NP_004789.1"/>
</dbReference>
<dbReference type="UCSC" id="uc002wxq.4">
    <molecule id="O15066-1"/>
    <property type="organism name" value="human"/>
</dbReference>
<dbReference type="AGR" id="HGNC:6320"/>
<dbReference type="CTD" id="9371"/>
<dbReference type="DisGeNET" id="9371"/>
<dbReference type="GeneCards" id="KIF3B"/>
<dbReference type="HGNC" id="HGNC:6320">
    <property type="gene designation" value="KIF3B"/>
</dbReference>
<dbReference type="HPA" id="ENSG00000101350">
    <property type="expression patterns" value="Low tissue specificity"/>
</dbReference>
<dbReference type="MalaCards" id="KIF3B"/>
<dbReference type="MIM" id="603754">
    <property type="type" value="gene"/>
</dbReference>
<dbReference type="MIM" id="618955">
    <property type="type" value="phenotype"/>
</dbReference>
<dbReference type="neXtProt" id="NX_O15066"/>
<dbReference type="OpenTargets" id="ENSG00000101350"/>
<dbReference type="PharmGKB" id="PA30103"/>
<dbReference type="VEuPathDB" id="HostDB:ENSG00000101350"/>
<dbReference type="eggNOG" id="KOG4280">
    <property type="taxonomic scope" value="Eukaryota"/>
</dbReference>
<dbReference type="GeneTree" id="ENSGT00940000153739"/>
<dbReference type="HOGENOM" id="CLU_001485_22_4_1"/>
<dbReference type="InParanoid" id="O15066"/>
<dbReference type="OMA" id="LESKMLC"/>
<dbReference type="OrthoDB" id="3176171at2759"/>
<dbReference type="PAN-GO" id="O15066">
    <property type="GO annotations" value="6 GO annotations based on evolutionary models"/>
</dbReference>
<dbReference type="PhylomeDB" id="O15066"/>
<dbReference type="TreeFam" id="TF105223"/>
<dbReference type="PathwayCommons" id="O15066"/>
<dbReference type="Reactome" id="R-HSA-1445148">
    <property type="pathway name" value="Translocation of SLC2A4 (GLUT4) to the plasma membrane"/>
</dbReference>
<dbReference type="Reactome" id="R-HSA-2132295">
    <property type="pathway name" value="MHC class II antigen presentation"/>
</dbReference>
<dbReference type="Reactome" id="R-HSA-5620924">
    <property type="pathway name" value="Intraflagellar transport"/>
</dbReference>
<dbReference type="Reactome" id="R-HSA-6811434">
    <property type="pathway name" value="COPI-dependent Golgi-to-ER retrograde traffic"/>
</dbReference>
<dbReference type="Reactome" id="R-HSA-983189">
    <property type="pathway name" value="Kinesins"/>
</dbReference>
<dbReference type="SignaLink" id="O15066"/>
<dbReference type="SIGNOR" id="O15066"/>
<dbReference type="BioGRID-ORCS" id="9371">
    <property type="hits" value="13 hits in 1165 CRISPR screens"/>
</dbReference>
<dbReference type="CD-CODE" id="8C2F96ED">
    <property type="entry name" value="Centrosome"/>
</dbReference>
<dbReference type="ChiTaRS" id="KIF3B">
    <property type="organism name" value="human"/>
</dbReference>
<dbReference type="EvolutionaryTrace" id="O15066"/>
<dbReference type="GeneWiki" id="KIF3B"/>
<dbReference type="GenomeRNAi" id="9371"/>
<dbReference type="Pharos" id="O15066">
    <property type="development level" value="Tbio"/>
</dbReference>
<dbReference type="PRO" id="PR:O15066"/>
<dbReference type="Proteomes" id="UP000005640">
    <property type="component" value="Chromosome 20"/>
</dbReference>
<dbReference type="RNAct" id="O15066">
    <property type="molecule type" value="protein"/>
</dbReference>
<dbReference type="Bgee" id="ENSG00000101350">
    <property type="expression patterns" value="Expressed in middle temporal gyrus and 207 other cell types or tissues"/>
</dbReference>
<dbReference type="GO" id="GO:1904115">
    <property type="term" value="C:axon cytoplasm"/>
    <property type="evidence" value="ECO:0007669"/>
    <property type="project" value="GOC"/>
</dbReference>
<dbReference type="GO" id="GO:0005813">
    <property type="term" value="C:centrosome"/>
    <property type="evidence" value="ECO:0000303"/>
    <property type="project" value="BHF-UCL"/>
</dbReference>
<dbReference type="GO" id="GO:0097542">
    <property type="term" value="C:ciliary tip"/>
    <property type="evidence" value="ECO:0000304"/>
    <property type="project" value="Reactome"/>
</dbReference>
<dbReference type="GO" id="GO:0005929">
    <property type="term" value="C:cilium"/>
    <property type="evidence" value="ECO:0000250"/>
    <property type="project" value="UniProtKB"/>
</dbReference>
<dbReference type="GO" id="GO:0005737">
    <property type="term" value="C:cytoplasm"/>
    <property type="evidence" value="ECO:0000318"/>
    <property type="project" value="GO_Central"/>
</dbReference>
<dbReference type="GO" id="GO:0005829">
    <property type="term" value="C:cytosol"/>
    <property type="evidence" value="ECO:0000304"/>
    <property type="project" value="Reactome"/>
</dbReference>
<dbReference type="GO" id="GO:0030425">
    <property type="term" value="C:dendrite"/>
    <property type="evidence" value="ECO:0000250"/>
    <property type="project" value="UniProtKB"/>
</dbReference>
<dbReference type="GO" id="GO:0032839">
    <property type="term" value="C:dendrite cytoplasm"/>
    <property type="evidence" value="ECO:0007669"/>
    <property type="project" value="GOC"/>
</dbReference>
<dbReference type="GO" id="GO:0043197">
    <property type="term" value="C:dendritic spine"/>
    <property type="evidence" value="ECO:0007669"/>
    <property type="project" value="UniProtKB-SubCell"/>
</dbReference>
<dbReference type="GO" id="GO:0070062">
    <property type="term" value="C:extracellular exosome"/>
    <property type="evidence" value="ECO:0007005"/>
    <property type="project" value="UniProtKB"/>
</dbReference>
<dbReference type="GO" id="GO:0098978">
    <property type="term" value="C:glutamatergic synapse"/>
    <property type="evidence" value="ECO:0007669"/>
    <property type="project" value="Ensembl"/>
</dbReference>
<dbReference type="GO" id="GO:0005871">
    <property type="term" value="C:kinesin complex"/>
    <property type="evidence" value="ECO:0000318"/>
    <property type="project" value="GO_Central"/>
</dbReference>
<dbReference type="GO" id="GO:0016939">
    <property type="term" value="C:kinesin II complex"/>
    <property type="evidence" value="ECO:0000314"/>
    <property type="project" value="BHF-UCL"/>
</dbReference>
<dbReference type="GO" id="GO:0016020">
    <property type="term" value="C:membrane"/>
    <property type="evidence" value="ECO:0007005"/>
    <property type="project" value="UniProtKB"/>
</dbReference>
<dbReference type="GO" id="GO:0005874">
    <property type="term" value="C:microtubule"/>
    <property type="evidence" value="ECO:0000318"/>
    <property type="project" value="GO_Central"/>
</dbReference>
<dbReference type="GO" id="GO:0015630">
    <property type="term" value="C:microtubule cytoskeleton"/>
    <property type="evidence" value="ECO:0000314"/>
    <property type="project" value="BHF-UCL"/>
</dbReference>
<dbReference type="GO" id="GO:0030496">
    <property type="term" value="C:midbody"/>
    <property type="evidence" value="ECO:0007669"/>
    <property type="project" value="Ensembl"/>
</dbReference>
<dbReference type="GO" id="GO:0005873">
    <property type="term" value="C:plus-end kinesin complex"/>
    <property type="evidence" value="ECO:0000304"/>
    <property type="project" value="ProtInc"/>
</dbReference>
<dbReference type="GO" id="GO:0005524">
    <property type="term" value="F:ATP binding"/>
    <property type="evidence" value="ECO:0007669"/>
    <property type="project" value="UniProtKB-KW"/>
</dbReference>
<dbReference type="GO" id="GO:0016887">
    <property type="term" value="F:ATP hydrolysis activity"/>
    <property type="evidence" value="ECO:0000318"/>
    <property type="project" value="GO_Central"/>
</dbReference>
<dbReference type="GO" id="GO:0120170">
    <property type="term" value="F:intraciliary transport particle B binding"/>
    <property type="evidence" value="ECO:0007669"/>
    <property type="project" value="Ensembl"/>
</dbReference>
<dbReference type="GO" id="GO:0008017">
    <property type="term" value="F:microtubule binding"/>
    <property type="evidence" value="ECO:0000318"/>
    <property type="project" value="GO_Central"/>
</dbReference>
<dbReference type="GO" id="GO:0003777">
    <property type="term" value="F:microtubule motor activity"/>
    <property type="evidence" value="ECO:0000318"/>
    <property type="project" value="GO_Central"/>
</dbReference>
<dbReference type="GO" id="GO:0008574">
    <property type="term" value="F:plus-end-directed microtubule motor activity"/>
    <property type="evidence" value="ECO:0000304"/>
    <property type="project" value="ProtInc"/>
</dbReference>
<dbReference type="GO" id="GO:0031267">
    <property type="term" value="F:small GTPase binding"/>
    <property type="evidence" value="ECO:0000353"/>
    <property type="project" value="BHF-UCL"/>
</dbReference>
<dbReference type="GO" id="GO:0008089">
    <property type="term" value="P:anterograde axonal transport"/>
    <property type="evidence" value="ECO:0000304"/>
    <property type="project" value="ProtInc"/>
</dbReference>
<dbReference type="GO" id="GO:0098971">
    <property type="term" value="P:anterograde dendritic transport of neurotransmitter receptor complex"/>
    <property type="evidence" value="ECO:0000250"/>
    <property type="project" value="UniProtKB"/>
</dbReference>
<dbReference type="GO" id="GO:0060271">
    <property type="term" value="P:cilium assembly"/>
    <property type="evidence" value="ECO:0000315"/>
    <property type="project" value="UniProtKB"/>
</dbReference>
<dbReference type="GO" id="GO:0007368">
    <property type="term" value="P:determination of left/right symmetry"/>
    <property type="evidence" value="ECO:0000304"/>
    <property type="project" value="ProtInc"/>
</dbReference>
<dbReference type="GO" id="GO:0042073">
    <property type="term" value="P:intraciliary transport"/>
    <property type="evidence" value="ECO:0000315"/>
    <property type="project" value="UniProtKB"/>
</dbReference>
<dbReference type="GO" id="GO:0007018">
    <property type="term" value="P:microtubule-based movement"/>
    <property type="evidence" value="ECO:0000318"/>
    <property type="project" value="GO_Central"/>
</dbReference>
<dbReference type="GO" id="GO:0007100">
    <property type="term" value="P:mitotic centrosome separation"/>
    <property type="evidence" value="ECO:0000304"/>
    <property type="project" value="BHF-UCL"/>
</dbReference>
<dbReference type="GO" id="GO:0090307">
    <property type="term" value="P:mitotic spindle assembly"/>
    <property type="evidence" value="ECO:0000315"/>
    <property type="project" value="BHF-UCL"/>
</dbReference>
<dbReference type="GO" id="GO:0007052">
    <property type="term" value="P:mitotic spindle organization"/>
    <property type="evidence" value="ECO:0000304"/>
    <property type="project" value="BHF-UCL"/>
</dbReference>
<dbReference type="GO" id="GO:0036372">
    <property type="term" value="P:opsin transport"/>
    <property type="evidence" value="ECO:0000315"/>
    <property type="project" value="UniProtKB"/>
</dbReference>
<dbReference type="GO" id="GO:0072383">
    <property type="term" value="P:plus-end-directed vesicle transport along microtubule"/>
    <property type="evidence" value="ECO:0000304"/>
    <property type="project" value="BHF-UCL"/>
</dbReference>
<dbReference type="GO" id="GO:0032467">
    <property type="term" value="P:positive regulation of cytokinesis"/>
    <property type="evidence" value="ECO:0007669"/>
    <property type="project" value="Ensembl"/>
</dbReference>
<dbReference type="GO" id="GO:0016192">
    <property type="term" value="P:vesicle-mediated transport"/>
    <property type="evidence" value="ECO:0007669"/>
    <property type="project" value="Ensembl"/>
</dbReference>
<dbReference type="CDD" id="cd01371">
    <property type="entry name" value="KISc_KIF3"/>
    <property type="match status" value="1"/>
</dbReference>
<dbReference type="FunFam" id="3.40.850.10:FF:000017">
    <property type="entry name" value="Kinesin-like protein"/>
    <property type="match status" value="1"/>
</dbReference>
<dbReference type="Gene3D" id="3.40.850.10">
    <property type="entry name" value="Kinesin motor domain"/>
    <property type="match status" value="1"/>
</dbReference>
<dbReference type="InterPro" id="IPR027640">
    <property type="entry name" value="Kinesin-like_fam"/>
</dbReference>
<dbReference type="InterPro" id="IPR019821">
    <property type="entry name" value="Kinesin_motor_CS"/>
</dbReference>
<dbReference type="InterPro" id="IPR001752">
    <property type="entry name" value="Kinesin_motor_dom"/>
</dbReference>
<dbReference type="InterPro" id="IPR036961">
    <property type="entry name" value="Kinesin_motor_dom_sf"/>
</dbReference>
<dbReference type="InterPro" id="IPR027417">
    <property type="entry name" value="P-loop_NTPase"/>
</dbReference>
<dbReference type="PANTHER" id="PTHR47968">
    <property type="entry name" value="CENTROMERE PROTEIN E"/>
    <property type="match status" value="1"/>
</dbReference>
<dbReference type="PANTHER" id="PTHR47968:SF76">
    <property type="entry name" value="KINESIN-LIKE PROTEIN"/>
    <property type="match status" value="1"/>
</dbReference>
<dbReference type="Pfam" id="PF00225">
    <property type="entry name" value="Kinesin"/>
    <property type="match status" value="1"/>
</dbReference>
<dbReference type="PRINTS" id="PR00380">
    <property type="entry name" value="KINESINHEAVY"/>
</dbReference>
<dbReference type="SMART" id="SM00129">
    <property type="entry name" value="KISc"/>
    <property type="match status" value="1"/>
</dbReference>
<dbReference type="SUPFAM" id="SSF52540">
    <property type="entry name" value="P-loop containing nucleoside triphosphate hydrolases"/>
    <property type="match status" value="1"/>
</dbReference>
<dbReference type="PROSITE" id="PS00411">
    <property type="entry name" value="KINESIN_MOTOR_1"/>
    <property type="match status" value="1"/>
</dbReference>
<dbReference type="PROSITE" id="PS50067">
    <property type="entry name" value="KINESIN_MOTOR_2"/>
    <property type="match status" value="1"/>
</dbReference>
<comment type="function">
    <text evidence="1 6">Microtubule-based molecular motor that transport intracellular cargos, such as vesicles, organelles and protein complexes. Uses ATP hydrolysis to generate force to bind and move along the microtubule (By similarity). Plays a role in cilia formation (PubMed:32386558). Involved in photoreceptor integrity and opsin trafficking in rod photoreceptors (PubMed:32386558). Transports vesicles containing N-methyl-D-aspartate (NMDA) receptor subunit GRIN2A into neuronal dendrites (By similarity).</text>
</comment>
<comment type="subunit">
    <text evidence="1 5 7">Heterodimer of KIF3A and KIF3B (By similarity). KIF3A/KIF3B heterodimer interacts with KIFAP3 forming a heterotrimeric (KIF3A/KIF3B/KIFAP3) complex (By similarity). Interacts directly with IFT20 (By similarity). Interacts with the SMC3 subunit of the cohesin complex (PubMed:9506951). Interacts with FLCN (PubMed:27072130).</text>
</comment>
<comment type="interaction">
    <interactant intactId="EBI-3931791">
        <id>O15066</id>
    </interactant>
    <interactant intactId="EBI-2515636">
        <id>O15013</id>
        <label>ARHGEF10</label>
    </interactant>
    <organismsDiffer>false</organismsDiffer>
    <experiments>3</experiments>
</comment>
<comment type="interaction">
    <interactant intactId="EBI-3931791">
        <id>O15066</id>
    </interactant>
    <interactant intactId="EBI-13619183">
        <id>P51795</id>
        <label>CLCN5</label>
    </interactant>
    <organismsDiffer>false</organismsDiffer>
    <experiments>6</experiments>
</comment>
<comment type="interaction">
    <interactant intactId="EBI-3931791">
        <id>O15066</id>
    </interactant>
    <interactant intactId="EBI-954040">
        <id>Q92845</id>
        <label>KIFAP3</label>
    </interactant>
    <organismsDiffer>false</organismsDiffer>
    <experiments>10</experiments>
</comment>
<comment type="subcellular location">
    <subcellularLocation>
        <location evidence="10">Cytoplasm</location>
        <location evidence="10">Cytoskeleton</location>
    </subcellularLocation>
    <subcellularLocation>
        <location evidence="1">Cell projection</location>
        <location evidence="1">Cilium</location>
    </subcellularLocation>
    <subcellularLocation>
        <location evidence="1">Cell projection</location>
        <location evidence="1">Dendritic spine</location>
    </subcellularLocation>
</comment>
<comment type="alternative products">
    <event type="alternative splicing"/>
    <isoform>
        <id>O15066-1</id>
        <name>1</name>
        <sequence type="displayed"/>
    </isoform>
    <isoform>
        <id>O15066-2</id>
        <name>2</name>
        <sequence type="described" ref="VSP_056489 VSP_056490"/>
    </isoform>
</comment>
<comment type="disease" evidence="6">
    <disease id="DI-05879">
        <name>Retinitis pigmentosa 89</name>
        <acronym>RP89</acronym>
        <description>A form of retinitis pigmentosa, a retinal dystrophy belonging to the group of pigmentary retinopathies. Retinitis pigmentosa is characterized by retinal pigment deposits visible on fundus examination and primary loss of rod photoreceptor cells followed by secondary loss of cone photoreceptors. Patients typically have night vision blindness and loss of midperipheral visual field. RP89 is an autosomal dominant form associated with features of ciliopathy, including postaxial polydactyly, and renal and hepatic disease.</description>
        <dbReference type="MIM" id="618955"/>
    </disease>
    <text>The gene represented in this entry may be involved in disease pathogenesis.</text>
</comment>
<comment type="similarity">
    <text evidence="3">Belongs to the TRAFAC class myosin-kinesin ATPase superfamily. Kinesin family. Kinesin II subfamily.</text>
</comment>
<comment type="sequence caution" evidence="10">
    <conflict type="erroneous initiation">
        <sequence resource="EMBL-CDS" id="BAA20815"/>
    </conflict>
</comment>
<reference key="1">
    <citation type="journal article" date="1997" name="DNA Res.">
        <title>Prediction of the coding sequences of unidentified human genes. VII. The complete sequences of 100 new cDNA clones from brain which can code for large proteins in vitro.</title>
        <authorList>
            <person name="Nagase T."/>
            <person name="Ishikawa K."/>
            <person name="Nakajima D."/>
            <person name="Ohira M."/>
            <person name="Seki N."/>
            <person name="Miyajima N."/>
            <person name="Tanaka A."/>
            <person name="Kotani H."/>
            <person name="Nomura N."/>
            <person name="Ohara O."/>
        </authorList>
    </citation>
    <scope>NUCLEOTIDE SEQUENCE [LARGE SCALE MRNA] (ISOFORM 1)</scope>
    <source>
        <tissue>Brain</tissue>
    </source>
</reference>
<reference key="2">
    <citation type="journal article" date="2004" name="Nat. Genet.">
        <title>Complete sequencing and characterization of 21,243 full-length human cDNAs.</title>
        <authorList>
            <person name="Ota T."/>
            <person name="Suzuki Y."/>
            <person name="Nishikawa T."/>
            <person name="Otsuki T."/>
            <person name="Sugiyama T."/>
            <person name="Irie R."/>
            <person name="Wakamatsu A."/>
            <person name="Hayashi K."/>
            <person name="Sato H."/>
            <person name="Nagai K."/>
            <person name="Kimura K."/>
            <person name="Makita H."/>
            <person name="Sekine M."/>
            <person name="Obayashi M."/>
            <person name="Nishi T."/>
            <person name="Shibahara T."/>
            <person name="Tanaka T."/>
            <person name="Ishii S."/>
            <person name="Yamamoto J."/>
            <person name="Saito K."/>
            <person name="Kawai Y."/>
            <person name="Isono Y."/>
            <person name="Nakamura Y."/>
            <person name="Nagahari K."/>
            <person name="Murakami K."/>
            <person name="Yasuda T."/>
            <person name="Iwayanagi T."/>
            <person name="Wagatsuma M."/>
            <person name="Shiratori A."/>
            <person name="Sudo H."/>
            <person name="Hosoiri T."/>
            <person name="Kaku Y."/>
            <person name="Kodaira H."/>
            <person name="Kondo H."/>
            <person name="Sugawara M."/>
            <person name="Takahashi M."/>
            <person name="Kanda K."/>
            <person name="Yokoi T."/>
            <person name="Furuya T."/>
            <person name="Kikkawa E."/>
            <person name="Omura Y."/>
            <person name="Abe K."/>
            <person name="Kamihara K."/>
            <person name="Katsuta N."/>
            <person name="Sato K."/>
            <person name="Tanikawa M."/>
            <person name="Yamazaki M."/>
            <person name="Ninomiya K."/>
            <person name="Ishibashi T."/>
            <person name="Yamashita H."/>
            <person name="Murakawa K."/>
            <person name="Fujimori K."/>
            <person name="Tanai H."/>
            <person name="Kimata M."/>
            <person name="Watanabe M."/>
            <person name="Hiraoka S."/>
            <person name="Chiba Y."/>
            <person name="Ishida S."/>
            <person name="Ono Y."/>
            <person name="Takiguchi S."/>
            <person name="Watanabe S."/>
            <person name="Yosida M."/>
            <person name="Hotuta T."/>
            <person name="Kusano J."/>
            <person name="Kanehori K."/>
            <person name="Takahashi-Fujii A."/>
            <person name="Hara H."/>
            <person name="Tanase T.-O."/>
            <person name="Nomura Y."/>
            <person name="Togiya S."/>
            <person name="Komai F."/>
            <person name="Hara R."/>
            <person name="Takeuchi K."/>
            <person name="Arita M."/>
            <person name="Imose N."/>
            <person name="Musashino K."/>
            <person name="Yuuki H."/>
            <person name="Oshima A."/>
            <person name="Sasaki N."/>
            <person name="Aotsuka S."/>
            <person name="Yoshikawa Y."/>
            <person name="Matsunawa H."/>
            <person name="Ichihara T."/>
            <person name="Shiohata N."/>
            <person name="Sano S."/>
            <person name="Moriya S."/>
            <person name="Momiyama H."/>
            <person name="Satoh N."/>
            <person name="Takami S."/>
            <person name="Terashima Y."/>
            <person name="Suzuki O."/>
            <person name="Nakagawa S."/>
            <person name="Senoh A."/>
            <person name="Mizoguchi H."/>
            <person name="Goto Y."/>
            <person name="Shimizu F."/>
            <person name="Wakebe H."/>
            <person name="Hishigaki H."/>
            <person name="Watanabe T."/>
            <person name="Sugiyama A."/>
            <person name="Takemoto M."/>
            <person name="Kawakami B."/>
            <person name="Yamazaki M."/>
            <person name="Watanabe K."/>
            <person name="Kumagai A."/>
            <person name="Itakura S."/>
            <person name="Fukuzumi Y."/>
            <person name="Fujimori Y."/>
            <person name="Komiyama M."/>
            <person name="Tashiro H."/>
            <person name="Tanigami A."/>
            <person name="Fujiwara T."/>
            <person name="Ono T."/>
            <person name="Yamada K."/>
            <person name="Fujii Y."/>
            <person name="Ozaki K."/>
            <person name="Hirao M."/>
            <person name="Ohmori Y."/>
            <person name="Kawabata A."/>
            <person name="Hikiji T."/>
            <person name="Kobatake N."/>
            <person name="Inagaki H."/>
            <person name="Ikema Y."/>
            <person name="Okamoto S."/>
            <person name="Okitani R."/>
            <person name="Kawakami T."/>
            <person name="Noguchi S."/>
            <person name="Itoh T."/>
            <person name="Shigeta K."/>
            <person name="Senba T."/>
            <person name="Matsumura K."/>
            <person name="Nakajima Y."/>
            <person name="Mizuno T."/>
            <person name="Morinaga M."/>
            <person name="Sasaki M."/>
            <person name="Togashi T."/>
            <person name="Oyama M."/>
            <person name="Hata H."/>
            <person name="Watanabe M."/>
            <person name="Komatsu T."/>
            <person name="Mizushima-Sugano J."/>
            <person name="Satoh T."/>
            <person name="Shirai Y."/>
            <person name="Takahashi Y."/>
            <person name="Nakagawa K."/>
            <person name="Okumura K."/>
            <person name="Nagase T."/>
            <person name="Nomura N."/>
            <person name="Kikuchi H."/>
            <person name="Masuho Y."/>
            <person name="Yamashita R."/>
            <person name="Nakai K."/>
            <person name="Yada T."/>
            <person name="Nakamura Y."/>
            <person name="Ohara O."/>
            <person name="Isogai T."/>
            <person name="Sugano S."/>
        </authorList>
    </citation>
    <scope>NUCLEOTIDE SEQUENCE [LARGE SCALE MRNA] (ISOFORM 2)</scope>
    <source>
        <tissue>Brain</tissue>
    </source>
</reference>
<reference key="3">
    <citation type="journal article" date="2001" name="Nature">
        <title>The DNA sequence and comparative analysis of human chromosome 20.</title>
        <authorList>
            <person name="Deloukas P."/>
            <person name="Matthews L.H."/>
            <person name="Ashurst J.L."/>
            <person name="Burton J."/>
            <person name="Gilbert J.G.R."/>
            <person name="Jones M."/>
            <person name="Stavrides G."/>
            <person name="Almeida J.P."/>
            <person name="Babbage A.K."/>
            <person name="Bagguley C.L."/>
            <person name="Bailey J."/>
            <person name="Barlow K.F."/>
            <person name="Bates K.N."/>
            <person name="Beard L.M."/>
            <person name="Beare D.M."/>
            <person name="Beasley O.P."/>
            <person name="Bird C.P."/>
            <person name="Blakey S.E."/>
            <person name="Bridgeman A.M."/>
            <person name="Brown A.J."/>
            <person name="Buck D."/>
            <person name="Burrill W.D."/>
            <person name="Butler A.P."/>
            <person name="Carder C."/>
            <person name="Carter N.P."/>
            <person name="Chapman J.C."/>
            <person name="Clamp M."/>
            <person name="Clark G."/>
            <person name="Clark L.N."/>
            <person name="Clark S.Y."/>
            <person name="Clee C.M."/>
            <person name="Clegg S."/>
            <person name="Cobley V.E."/>
            <person name="Collier R.E."/>
            <person name="Connor R.E."/>
            <person name="Corby N.R."/>
            <person name="Coulson A."/>
            <person name="Coville G.J."/>
            <person name="Deadman R."/>
            <person name="Dhami P.D."/>
            <person name="Dunn M."/>
            <person name="Ellington A.G."/>
            <person name="Frankland J.A."/>
            <person name="Fraser A."/>
            <person name="French L."/>
            <person name="Garner P."/>
            <person name="Grafham D.V."/>
            <person name="Griffiths C."/>
            <person name="Griffiths M.N.D."/>
            <person name="Gwilliam R."/>
            <person name="Hall R.E."/>
            <person name="Hammond S."/>
            <person name="Harley J.L."/>
            <person name="Heath P.D."/>
            <person name="Ho S."/>
            <person name="Holden J.L."/>
            <person name="Howden P.J."/>
            <person name="Huckle E."/>
            <person name="Hunt A.R."/>
            <person name="Hunt S.E."/>
            <person name="Jekosch K."/>
            <person name="Johnson C.M."/>
            <person name="Johnson D."/>
            <person name="Kay M.P."/>
            <person name="Kimberley A.M."/>
            <person name="King A."/>
            <person name="Knights A."/>
            <person name="Laird G.K."/>
            <person name="Lawlor S."/>
            <person name="Lehvaeslaiho M.H."/>
            <person name="Leversha M.A."/>
            <person name="Lloyd C."/>
            <person name="Lloyd D.M."/>
            <person name="Lovell J.D."/>
            <person name="Marsh V.L."/>
            <person name="Martin S.L."/>
            <person name="McConnachie L.J."/>
            <person name="McLay K."/>
            <person name="McMurray A.A."/>
            <person name="Milne S.A."/>
            <person name="Mistry D."/>
            <person name="Moore M.J.F."/>
            <person name="Mullikin J.C."/>
            <person name="Nickerson T."/>
            <person name="Oliver K."/>
            <person name="Parker A."/>
            <person name="Patel R."/>
            <person name="Pearce T.A.V."/>
            <person name="Peck A.I."/>
            <person name="Phillimore B.J.C.T."/>
            <person name="Prathalingam S.R."/>
            <person name="Plumb R.W."/>
            <person name="Ramsay H."/>
            <person name="Rice C.M."/>
            <person name="Ross M.T."/>
            <person name="Scott C.E."/>
            <person name="Sehra H.K."/>
            <person name="Shownkeen R."/>
            <person name="Sims S."/>
            <person name="Skuce C.D."/>
            <person name="Smith M.L."/>
            <person name="Soderlund C."/>
            <person name="Steward C.A."/>
            <person name="Sulston J.E."/>
            <person name="Swann R.M."/>
            <person name="Sycamore N."/>
            <person name="Taylor R."/>
            <person name="Tee L."/>
            <person name="Thomas D.W."/>
            <person name="Thorpe A."/>
            <person name="Tracey A."/>
            <person name="Tromans A.C."/>
            <person name="Vaudin M."/>
            <person name="Wall M."/>
            <person name="Wallis J.M."/>
            <person name="Whitehead S.L."/>
            <person name="Whittaker P."/>
            <person name="Willey D.L."/>
            <person name="Williams L."/>
            <person name="Williams S.A."/>
            <person name="Wilming L."/>
            <person name="Wray P.W."/>
            <person name="Hubbard T."/>
            <person name="Durbin R.M."/>
            <person name="Bentley D.R."/>
            <person name="Beck S."/>
            <person name="Rogers J."/>
        </authorList>
    </citation>
    <scope>NUCLEOTIDE SEQUENCE [LARGE SCALE GENOMIC DNA]</scope>
</reference>
<reference key="4">
    <citation type="submission" date="2005-09" db="EMBL/GenBank/DDBJ databases">
        <authorList>
            <person name="Mural R.J."/>
            <person name="Istrail S."/>
            <person name="Sutton G.G."/>
            <person name="Florea L."/>
            <person name="Halpern A.L."/>
            <person name="Mobarry C.M."/>
            <person name="Lippert R."/>
            <person name="Walenz B."/>
            <person name="Shatkay H."/>
            <person name="Dew I."/>
            <person name="Miller J.R."/>
            <person name="Flanigan M.J."/>
            <person name="Edwards N.J."/>
            <person name="Bolanos R."/>
            <person name="Fasulo D."/>
            <person name="Halldorsson B.V."/>
            <person name="Hannenhalli S."/>
            <person name="Turner R."/>
            <person name="Yooseph S."/>
            <person name="Lu F."/>
            <person name="Nusskern D.R."/>
            <person name="Shue B.C."/>
            <person name="Zheng X.H."/>
            <person name="Zhong F."/>
            <person name="Delcher A.L."/>
            <person name="Huson D.H."/>
            <person name="Kravitz S.A."/>
            <person name="Mouchard L."/>
            <person name="Reinert K."/>
            <person name="Remington K.A."/>
            <person name="Clark A.G."/>
            <person name="Waterman M.S."/>
            <person name="Eichler E.E."/>
            <person name="Adams M.D."/>
            <person name="Hunkapiller M.W."/>
            <person name="Myers E.W."/>
            <person name="Venter J.C."/>
        </authorList>
    </citation>
    <scope>NUCLEOTIDE SEQUENCE [LARGE SCALE GENOMIC DNA]</scope>
</reference>
<reference key="5">
    <citation type="journal article" date="2004" name="Genome Res.">
        <title>The status, quality, and expansion of the NIH full-length cDNA project: the Mammalian Gene Collection (MGC).</title>
        <authorList>
            <consortium name="The MGC Project Team"/>
        </authorList>
    </citation>
    <scope>NUCLEOTIDE SEQUENCE [LARGE SCALE MRNA] (ISOFORM 1)</scope>
    <source>
        <tissue>Brain</tissue>
        <tissue>Testis</tissue>
    </source>
</reference>
<reference key="6">
    <citation type="journal article" date="1998" name="J. Biol. Chem.">
        <title>Complex formation of SMAP/KAP3, a KIF3A/B ATPase motor-associated protein, with a human chromosome-associated polypeptide.</title>
        <authorList>
            <person name="Shimizu K."/>
            <person name="Shirataki H."/>
            <person name="Honda T."/>
            <person name="Minami S."/>
            <person name="Takai Y."/>
        </authorList>
    </citation>
    <scope>IDENTIFICATION IN A COMPLEX WITH SMC3 AND KIFAP3</scope>
</reference>
<reference key="7">
    <citation type="journal article" date="2008" name="Proc. Natl. Acad. Sci. U.S.A.">
        <title>A quantitative atlas of mitotic phosphorylation.</title>
        <authorList>
            <person name="Dephoure N."/>
            <person name="Zhou C."/>
            <person name="Villen J."/>
            <person name="Beausoleil S.A."/>
            <person name="Bakalarski C.E."/>
            <person name="Elledge S.J."/>
            <person name="Gygi S.P."/>
        </authorList>
    </citation>
    <scope>IDENTIFICATION BY MASS SPECTROMETRY [LARGE SCALE ANALYSIS]</scope>
    <source>
        <tissue>Cervix carcinoma</tissue>
    </source>
</reference>
<reference key="8">
    <citation type="journal article" date="2012" name="Proc. Natl. Acad. Sci. U.S.A.">
        <title>N-terminal acetylome analyses and functional insights of the N-terminal acetyltransferase NatB.</title>
        <authorList>
            <person name="Van Damme P."/>
            <person name="Lasa M."/>
            <person name="Polevoda B."/>
            <person name="Gazquez C."/>
            <person name="Elosegui-Artola A."/>
            <person name="Kim D.S."/>
            <person name="De Juan-Pardo E."/>
            <person name="Demeyer K."/>
            <person name="Hole K."/>
            <person name="Larrea E."/>
            <person name="Timmerman E."/>
            <person name="Prieto J."/>
            <person name="Arnesen T."/>
            <person name="Sherman F."/>
            <person name="Gevaert K."/>
            <person name="Aldabe R."/>
        </authorList>
    </citation>
    <scope>ACETYLATION [LARGE SCALE ANALYSIS] AT MET-1 AND SER-2</scope>
    <scope>CLEAVAGE OF INITIATOR METHIONINE [LARGE SCALE ANALYSIS]</scope>
    <scope>IDENTIFICATION BY MASS SPECTROMETRY [LARGE SCALE ANALYSIS]</scope>
</reference>
<reference key="9">
    <citation type="journal article" date="2013" name="J. Proteome Res.">
        <title>Toward a comprehensive characterization of a human cancer cell phosphoproteome.</title>
        <authorList>
            <person name="Zhou H."/>
            <person name="Di Palma S."/>
            <person name="Preisinger C."/>
            <person name="Peng M."/>
            <person name="Polat A.N."/>
            <person name="Heck A.J."/>
            <person name="Mohammed S."/>
        </authorList>
    </citation>
    <scope>IDENTIFICATION BY MASS SPECTROMETRY [LARGE SCALE ANALYSIS]</scope>
    <source>
        <tissue>Cervix carcinoma</tissue>
        <tissue>Erythroleukemia</tissue>
    </source>
</reference>
<reference key="10">
    <citation type="journal article" date="2016" name="J. Biol. Chem.">
        <title>Tumor suppressor folliculin regulates mTORC1 through primary cilia.</title>
        <authorList>
            <person name="Zhong M."/>
            <person name="Zhao X."/>
            <person name="Li J."/>
            <person name="Yuan W."/>
            <person name="Yan G."/>
            <person name="Tong M."/>
            <person name="Guo S."/>
            <person name="Zhu Y."/>
            <person name="Jiang Y."/>
            <person name="Liu Y."/>
            <person name="Jiang Y."/>
        </authorList>
    </citation>
    <scope>INTERACTION WITH FLCN</scope>
</reference>
<reference key="11">
    <citation type="submission" date="2009-02" db="PDB data bank">
        <title>Motor domain of human kinesin family member 3B in complex with ADP.</title>
        <authorList>
            <consortium name="Structural genomics consortium (SGC)"/>
        </authorList>
    </citation>
    <scope>X-RAY CRYSTALLOGRAPHY (1.8 ANGSTROMS) OF 6-359 IN COMPLEX WITH ADP</scope>
</reference>
<reference key="12">
    <citation type="journal article" date="2020" name="Am. J. Hum. Genet.">
        <title>Mutations in the Kinesin-2 Motor KIF3B Cause an Autosomal-Dominant Ciliopathy.</title>
        <authorList>
            <consortium name="99 Lives Consortium"/>
            <person name="Cogne B."/>
            <person name="Latypova X."/>
            <person name="Senaratne L.D.S."/>
            <person name="Martin L."/>
            <person name="Koboldt D.C."/>
            <person name="Kellaris G."/>
            <person name="Fievet L."/>
            <person name="Le Meur G."/>
            <person name="Caldari D."/>
            <person name="Debray D."/>
            <person name="Nizon M."/>
            <person name="Frengen E."/>
            <person name="Bowne S.J."/>
            <person name="Cadena E.L."/>
            <person name="Daiger S.P."/>
            <person name="Bujakowska K.M."/>
            <person name="Pierce E.A."/>
            <person name="Gorin M."/>
            <person name="Katsanis N."/>
            <person name="Bezieau S."/>
            <person name="Petersen-Jones S.M."/>
            <person name="Occelli L.M."/>
            <person name="Lyons L.A."/>
            <person name="Legeai-Mallet L."/>
            <person name="Sullivan L.S."/>
            <person name="Davis E.E."/>
            <person name="Isidor B."/>
        </authorList>
    </citation>
    <scope>INVOLVEMENT IN RP89</scope>
    <scope>VARIANTS RP89 GLN-250 AND PRO-523</scope>
    <scope>CHARACTERIZATION OF VARIANTS RP89 GLN-250 AND PRO-523</scope>
    <scope>FUNCTION</scope>
    <scope>MUTAGENESIS OF VAL-435</scope>
</reference>
<name>KIF3B_HUMAN</name>
<sequence>MSKLKSSESVRVVVRCRPMNGKEKAASYDKVVDVDVKLGQVSVKNPKGTAHEMPKTFTFDAVYDWNAKQFELYDETFRPLVDSVLQGFNGTIFAYGQTGTGKTYTMEGIRGDPEKRGVIPNSFDHIFTHISRSQNQQYLVRASYLEIYQEEIRDLLSKDQTKRLELKERPDTGVYVKDLSSFVTKSVKEIEHVMNVGNQNRSVGATNMNEHSSRSHAIFVITIECSEVGLDGENHIRVGKLNLVDLAGSERQAKTGAQGERLKEATKINLSLSALGNVISALVDGKSTHIPYRDSKLTRLLQDSLGGNAKTVMVANVGPASYNVEETLTTLRYANRAKNIKNKPRVNEDPKDALLREFQEEIARLKAQLEKRSIGRRKRREKRREGGGSGGGGEEEEEEGEEGEEEGDDKDDYWREQQEKLEIEKRAIVEDHSLVAEEKMRLLKEKEKKMEDLRREKDAAEMLGAKIKAMESKLLVGGKNIVDHTNEQQKILEQKRQEIAEQKRREREIQQQMESRDEETLELKETYSSLQQEVDIKTKKLKKLFSKLQAVKAEIHDLQEEHIKERQELEQTQNELTRELKLKHLIIENFIPLEEKSKIMNRAFFDEEEDHWKLHPITRLENQQMMKRPVSAVGYKRPLSQHARMSMMIRPEARYRAENIVLLELDMPSRTTRDYEGPAIAPKVQAALDAALQDEDEIQVDASSFESTANKKSKARPKSGRKSGSSSSSSGTPASQLYPQSRGLVPK</sequence>
<keyword id="KW-0002">3D-structure</keyword>
<keyword id="KW-0007">Acetylation</keyword>
<keyword id="KW-0025">Alternative splicing</keyword>
<keyword id="KW-0067">ATP-binding</keyword>
<keyword id="KW-0966">Cell projection</keyword>
<keyword id="KW-1186">Ciliopathy</keyword>
<keyword id="KW-0175">Coiled coil</keyword>
<keyword id="KW-0963">Cytoplasm</keyword>
<keyword id="KW-0206">Cytoskeleton</keyword>
<keyword id="KW-0225">Disease variant</keyword>
<keyword id="KW-0493">Microtubule</keyword>
<keyword id="KW-0505">Motor protein</keyword>
<keyword id="KW-0547">Nucleotide-binding</keyword>
<keyword id="KW-1267">Proteomics identification</keyword>
<keyword id="KW-1185">Reference proteome</keyword>
<keyword id="KW-0682">Retinitis pigmentosa</keyword>
<keyword id="KW-0770">Synapse</keyword>
<evidence type="ECO:0000250" key="1">
    <source>
        <dbReference type="UniProtKB" id="Q61771"/>
    </source>
</evidence>
<evidence type="ECO:0000255" key="2"/>
<evidence type="ECO:0000255" key="3">
    <source>
        <dbReference type="PROSITE-ProRule" id="PRU00283"/>
    </source>
</evidence>
<evidence type="ECO:0000256" key="4">
    <source>
        <dbReference type="SAM" id="MobiDB-lite"/>
    </source>
</evidence>
<evidence type="ECO:0000269" key="5">
    <source>
    </source>
</evidence>
<evidence type="ECO:0000269" key="6">
    <source>
    </source>
</evidence>
<evidence type="ECO:0000269" key="7">
    <source>
    </source>
</evidence>
<evidence type="ECO:0000269" key="8">
    <source ref="11"/>
</evidence>
<evidence type="ECO:0000303" key="9">
    <source>
    </source>
</evidence>
<evidence type="ECO:0000305" key="10"/>
<evidence type="ECO:0007744" key="11">
    <source>
        <dbReference type="PDB" id="3B6U"/>
    </source>
</evidence>
<evidence type="ECO:0007744" key="12">
    <source>
    </source>
</evidence>
<evidence type="ECO:0007829" key="13">
    <source>
        <dbReference type="PDB" id="3B6U"/>
    </source>
</evidence>
<feature type="chain" id="PRO_0000125395" description="Kinesin-like protein KIF3B">
    <location>
        <begin position="1"/>
        <end position="747"/>
    </location>
</feature>
<feature type="initiator methionine" description="Removed; alternate" evidence="12">
    <location>
        <position position="1"/>
    </location>
</feature>
<feature type="chain" id="PRO_0000424495" description="Kinesin-like protein KIF3B, N-terminally processed">
    <location>
        <begin position="2"/>
        <end position="747"/>
    </location>
</feature>
<feature type="domain" description="Kinesin motor" evidence="3">
    <location>
        <begin position="9"/>
        <end position="340"/>
    </location>
</feature>
<feature type="region of interest" description="Disordered" evidence="4">
    <location>
        <begin position="374"/>
        <end position="412"/>
    </location>
</feature>
<feature type="region of interest" description="Globular">
    <location>
        <begin position="580"/>
        <end position="747"/>
    </location>
</feature>
<feature type="region of interest" description="Disordered" evidence="4">
    <location>
        <begin position="699"/>
        <end position="747"/>
    </location>
</feature>
<feature type="coiled-coil region" evidence="2">
    <location>
        <begin position="346"/>
        <end position="579"/>
    </location>
</feature>
<feature type="compositionally biased region" description="Acidic residues" evidence="4">
    <location>
        <begin position="393"/>
        <end position="411"/>
    </location>
</feature>
<feature type="compositionally biased region" description="Polar residues" evidence="4">
    <location>
        <begin position="701"/>
        <end position="710"/>
    </location>
</feature>
<feature type="compositionally biased region" description="Basic residues" evidence="4">
    <location>
        <begin position="711"/>
        <end position="721"/>
    </location>
</feature>
<feature type="compositionally biased region" description="Low complexity" evidence="4">
    <location>
        <begin position="722"/>
        <end position="735"/>
    </location>
</feature>
<feature type="binding site" evidence="8 11">
    <location>
        <begin position="96"/>
        <end position="103"/>
    </location>
    <ligand>
        <name>ATP</name>
        <dbReference type="ChEBI" id="CHEBI:30616"/>
    </ligand>
</feature>
<feature type="modified residue" description="N-acetylmethionine" evidence="12">
    <location>
        <position position="1"/>
    </location>
</feature>
<feature type="modified residue" description="N-acetylserine; in Kinesin-like protein KIF3B, N-terminally processed" evidence="12">
    <location>
        <position position="2"/>
    </location>
</feature>
<feature type="splice variant" id="VSP_056489" description="In isoform 2." evidence="9">
    <location>
        <begin position="1"/>
        <end position="312"/>
    </location>
</feature>
<feature type="splice variant" id="VSP_056490" description="In isoform 2." evidence="9">
    <location>
        <begin position="375"/>
        <end position="436"/>
    </location>
</feature>
<feature type="sequence variant" id="VAR_084674" description="In RP89; increase in primary cilia length; does not affect protein stability; significant increase of rhodopsin in the rod inner segment when expressed in zebrafish; coinjection with wild-type rescued the rhodopsin mislocalization defects; dbSNP:rs2047794498." evidence="6">
    <original>E</original>
    <variation>Q</variation>
    <location>
        <position position="250"/>
    </location>
</feature>
<feature type="sequence variant" id="VAR_084675" description="In RP89; increase in primary cilia length; does not affect protein stability; significant increase of rhodopsin in the rod inner segment when expressed in zebrafish; coinjection with wild-type rescued the rhodopsin mislocalization defects; dbSNP:rs2047828707." evidence="6">
    <original>L</original>
    <variation>P</variation>
    <location>
        <position position="523"/>
    </location>
</feature>
<feature type="mutagenesis site" description="Does not affect protein stability nor cilia length." evidence="6">
    <original>V</original>
    <variation>I</variation>
    <location>
        <position position="435"/>
    </location>
</feature>
<feature type="strand" evidence="13">
    <location>
        <begin position="11"/>
        <end position="16"/>
    </location>
</feature>
<feature type="helix" evidence="13">
    <location>
        <begin position="21"/>
        <end position="25"/>
    </location>
</feature>
<feature type="strand" evidence="13">
    <location>
        <begin position="32"/>
        <end position="35"/>
    </location>
</feature>
<feature type="turn" evidence="13">
    <location>
        <begin position="36"/>
        <end position="39"/>
    </location>
</feature>
<feature type="strand" evidence="13">
    <location>
        <begin position="40"/>
        <end position="43"/>
    </location>
</feature>
<feature type="turn" evidence="13">
    <location>
        <begin position="49"/>
        <end position="51"/>
    </location>
</feature>
<feature type="strand" evidence="13">
    <location>
        <begin position="55"/>
        <end position="58"/>
    </location>
</feature>
<feature type="strand" evidence="13">
    <location>
        <begin position="60"/>
        <end position="63"/>
    </location>
</feature>
<feature type="helix" evidence="13">
    <location>
        <begin position="69"/>
        <end position="75"/>
    </location>
</feature>
<feature type="helix" evidence="13">
    <location>
        <begin position="77"/>
        <end position="85"/>
    </location>
</feature>
<feature type="strand" evidence="13">
    <location>
        <begin position="90"/>
        <end position="97"/>
    </location>
</feature>
<feature type="helix" evidence="13">
    <location>
        <begin position="102"/>
        <end position="106"/>
    </location>
</feature>
<feature type="helix" evidence="13">
    <location>
        <begin position="113"/>
        <end position="115"/>
    </location>
</feature>
<feature type="helix" evidence="13">
    <location>
        <begin position="118"/>
        <end position="131"/>
    </location>
</feature>
<feature type="strand" evidence="13">
    <location>
        <begin position="137"/>
        <end position="148"/>
    </location>
</feature>
<feature type="strand" evidence="13">
    <location>
        <begin position="151"/>
        <end position="154"/>
    </location>
</feature>
<feature type="strand" evidence="13">
    <location>
        <begin position="166"/>
        <end position="169"/>
    </location>
</feature>
<feature type="turn" evidence="13">
    <location>
        <begin position="170"/>
        <end position="172"/>
    </location>
</feature>
<feature type="strand" evidence="13">
    <location>
        <begin position="173"/>
        <end position="176"/>
    </location>
</feature>
<feature type="helix" evidence="13">
    <location>
        <begin position="187"/>
        <end position="201"/>
    </location>
</feature>
<feature type="turn" evidence="13">
    <location>
        <begin position="202"/>
        <end position="204"/>
    </location>
</feature>
<feature type="helix" evidence="13">
    <location>
        <begin position="208"/>
        <end position="213"/>
    </location>
</feature>
<feature type="strand" evidence="13">
    <location>
        <begin position="215"/>
        <end position="228"/>
    </location>
</feature>
<feature type="strand" evidence="13">
    <location>
        <begin position="235"/>
        <end position="245"/>
    </location>
</feature>
<feature type="strand" evidence="13">
    <location>
        <begin position="261"/>
        <end position="264"/>
    </location>
</feature>
<feature type="helix" evidence="13">
    <location>
        <begin position="265"/>
        <end position="267"/>
    </location>
</feature>
<feature type="helix" evidence="13">
    <location>
        <begin position="270"/>
        <end position="283"/>
    </location>
</feature>
<feature type="helix" evidence="13">
    <location>
        <begin position="292"/>
        <end position="294"/>
    </location>
</feature>
<feature type="helix" evidence="13">
    <location>
        <begin position="296"/>
        <end position="300"/>
    </location>
</feature>
<feature type="turn" evidence="13">
    <location>
        <begin position="301"/>
        <end position="306"/>
    </location>
</feature>
<feature type="strand" evidence="13">
    <location>
        <begin position="307"/>
        <end position="317"/>
    </location>
</feature>
<feature type="helix" evidence="13">
    <location>
        <begin position="321"/>
        <end position="323"/>
    </location>
</feature>
<feature type="helix" evidence="13">
    <location>
        <begin position="324"/>
        <end position="337"/>
    </location>
</feature>
<feature type="helix" evidence="13">
    <location>
        <begin position="354"/>
        <end position="357"/>
    </location>
</feature>
<proteinExistence type="evidence at protein level"/>
<accession>O15066</accession>
<accession>B2RMP4</accession>
<accession>B4DSR5</accession>
<accession>E1P5M5</accession>
<protein>
    <recommendedName>
        <fullName>Kinesin-like protein KIF3B</fullName>
    </recommendedName>
    <alternativeName>
        <fullName>HH0048</fullName>
    </alternativeName>
    <alternativeName>
        <fullName>Microtubule plus end-directed kinesin motor 3B</fullName>
    </alternativeName>
    <component>
        <recommendedName>
            <fullName>Kinesin-like protein KIF3B, N-terminally processed</fullName>
        </recommendedName>
    </component>
</protein>
<gene>
    <name type="primary">KIF3B</name>
    <name type="synonym">KIAA0359</name>
</gene>
<organism>
    <name type="scientific">Homo sapiens</name>
    <name type="common">Human</name>
    <dbReference type="NCBI Taxonomy" id="9606"/>
    <lineage>
        <taxon>Eukaryota</taxon>
        <taxon>Metazoa</taxon>
        <taxon>Chordata</taxon>
        <taxon>Craniata</taxon>
        <taxon>Vertebrata</taxon>
        <taxon>Euteleostomi</taxon>
        <taxon>Mammalia</taxon>
        <taxon>Eutheria</taxon>
        <taxon>Euarchontoglires</taxon>
        <taxon>Primates</taxon>
        <taxon>Haplorrhini</taxon>
        <taxon>Catarrhini</taxon>
        <taxon>Hominidae</taxon>
        <taxon>Homo</taxon>
    </lineage>
</organism>